<name>CH10_METSS</name>
<sequence>MSIRPLYDKVVVKRIEAQRTTASGIVIPDTASEKPEQGEVIATGNGRRLQDGTQVPLEVKVGDQVLFGKYAGQTVKLHGEELLVLREEDILGVVEASDAKLKKVA</sequence>
<comment type="function">
    <text evidence="1">Together with the chaperonin GroEL, plays an essential role in assisting protein folding. The GroEL-GroES system forms a nano-cage that allows encapsulation of the non-native substrate proteins and provides a physical environment optimized to promote and accelerate protein folding. GroES binds to the apical surface of the GroEL ring, thereby capping the opening of the GroEL channel.</text>
</comment>
<comment type="subunit">
    <text evidence="1">Heptamer of 7 subunits arranged in a ring. Interacts with the chaperonin GroEL.</text>
</comment>
<comment type="subcellular location">
    <subcellularLocation>
        <location evidence="1">Cytoplasm</location>
    </subcellularLocation>
</comment>
<comment type="similarity">
    <text evidence="1">Belongs to the GroES chaperonin family.</text>
</comment>
<keyword id="KW-0143">Chaperone</keyword>
<keyword id="KW-0963">Cytoplasm</keyword>
<feature type="chain" id="PRO_0000174783" description="Co-chaperonin GroES">
    <location>
        <begin position="1"/>
        <end position="105"/>
    </location>
</feature>
<protein>
    <recommendedName>
        <fullName evidence="1">Co-chaperonin GroES</fullName>
    </recommendedName>
    <alternativeName>
        <fullName evidence="1">10 kDa chaperonin</fullName>
    </alternativeName>
    <alternativeName>
        <fullName evidence="1">Chaperonin-10</fullName>
        <shortName evidence="1">Cpn10</shortName>
    </alternativeName>
</protein>
<gene>
    <name evidence="1" type="primary">groES</name>
    <name evidence="1" type="synonym">groS</name>
</gene>
<organism>
    <name type="scientific">Methylovorus sp. (strain SS1 / DSM 11726)</name>
    <dbReference type="NCBI Taxonomy" id="81683"/>
    <lineage>
        <taxon>Bacteria</taxon>
        <taxon>Pseudomonadati</taxon>
        <taxon>Pseudomonadota</taxon>
        <taxon>Betaproteobacteria</taxon>
        <taxon>Nitrosomonadales</taxon>
        <taxon>Methylophilaceae</taxon>
        <taxon>Methylovorus</taxon>
    </lineage>
</organism>
<accession>Q9WWL3</accession>
<reference key="1">
    <citation type="submission" date="1999-05" db="EMBL/GenBank/DDBJ databases">
        <title>Cloning, sequencing, and molecular analysis of the groESL operon from Methylovorus sp. strain SS1 DSM11726.</title>
        <authorList>
            <person name="Eom C.Y."/>
            <person name="Kim Y.M."/>
        </authorList>
    </citation>
    <scope>NUCLEOTIDE SEQUENCE [GENOMIC DNA]</scope>
</reference>
<evidence type="ECO:0000255" key="1">
    <source>
        <dbReference type="HAMAP-Rule" id="MF_00580"/>
    </source>
</evidence>
<proteinExistence type="inferred from homology"/>
<dbReference type="EMBL" id="AF152236">
    <property type="protein sequence ID" value="AAD34148.1"/>
    <property type="molecule type" value="Genomic_DNA"/>
</dbReference>
<dbReference type="SMR" id="Q9WWL3"/>
<dbReference type="GO" id="GO:0005737">
    <property type="term" value="C:cytoplasm"/>
    <property type="evidence" value="ECO:0007669"/>
    <property type="project" value="UniProtKB-SubCell"/>
</dbReference>
<dbReference type="GO" id="GO:0005524">
    <property type="term" value="F:ATP binding"/>
    <property type="evidence" value="ECO:0007669"/>
    <property type="project" value="InterPro"/>
</dbReference>
<dbReference type="GO" id="GO:0046872">
    <property type="term" value="F:metal ion binding"/>
    <property type="evidence" value="ECO:0007669"/>
    <property type="project" value="TreeGrafter"/>
</dbReference>
<dbReference type="GO" id="GO:0044183">
    <property type="term" value="F:protein folding chaperone"/>
    <property type="evidence" value="ECO:0007669"/>
    <property type="project" value="InterPro"/>
</dbReference>
<dbReference type="GO" id="GO:0051087">
    <property type="term" value="F:protein-folding chaperone binding"/>
    <property type="evidence" value="ECO:0007669"/>
    <property type="project" value="TreeGrafter"/>
</dbReference>
<dbReference type="GO" id="GO:0051082">
    <property type="term" value="F:unfolded protein binding"/>
    <property type="evidence" value="ECO:0007669"/>
    <property type="project" value="TreeGrafter"/>
</dbReference>
<dbReference type="GO" id="GO:0051085">
    <property type="term" value="P:chaperone cofactor-dependent protein refolding"/>
    <property type="evidence" value="ECO:0007669"/>
    <property type="project" value="TreeGrafter"/>
</dbReference>
<dbReference type="CDD" id="cd00320">
    <property type="entry name" value="cpn10"/>
    <property type="match status" value="1"/>
</dbReference>
<dbReference type="FunFam" id="2.30.33.40:FF:000001">
    <property type="entry name" value="10 kDa chaperonin"/>
    <property type="match status" value="1"/>
</dbReference>
<dbReference type="Gene3D" id="2.30.33.40">
    <property type="entry name" value="GroES chaperonin"/>
    <property type="match status" value="1"/>
</dbReference>
<dbReference type="HAMAP" id="MF_00580">
    <property type="entry name" value="CH10"/>
    <property type="match status" value="1"/>
</dbReference>
<dbReference type="InterPro" id="IPR020818">
    <property type="entry name" value="Chaperonin_GroES"/>
</dbReference>
<dbReference type="InterPro" id="IPR037124">
    <property type="entry name" value="Chaperonin_GroES_sf"/>
</dbReference>
<dbReference type="InterPro" id="IPR018369">
    <property type="entry name" value="Chaprnonin_Cpn10_CS"/>
</dbReference>
<dbReference type="InterPro" id="IPR011032">
    <property type="entry name" value="GroES-like_sf"/>
</dbReference>
<dbReference type="NCBIfam" id="NF001527">
    <property type="entry name" value="PRK00364.1-2"/>
    <property type="match status" value="1"/>
</dbReference>
<dbReference type="NCBIfam" id="NF001531">
    <property type="entry name" value="PRK00364.2-2"/>
    <property type="match status" value="1"/>
</dbReference>
<dbReference type="NCBIfam" id="NF001533">
    <property type="entry name" value="PRK00364.2-4"/>
    <property type="match status" value="1"/>
</dbReference>
<dbReference type="NCBIfam" id="NF001534">
    <property type="entry name" value="PRK00364.2-5"/>
    <property type="match status" value="1"/>
</dbReference>
<dbReference type="PANTHER" id="PTHR10772">
    <property type="entry name" value="10 KDA HEAT SHOCK PROTEIN"/>
    <property type="match status" value="1"/>
</dbReference>
<dbReference type="PANTHER" id="PTHR10772:SF58">
    <property type="entry name" value="CO-CHAPERONIN GROES"/>
    <property type="match status" value="1"/>
</dbReference>
<dbReference type="Pfam" id="PF00166">
    <property type="entry name" value="Cpn10"/>
    <property type="match status" value="1"/>
</dbReference>
<dbReference type="PRINTS" id="PR00297">
    <property type="entry name" value="CHAPERONIN10"/>
</dbReference>
<dbReference type="SMART" id="SM00883">
    <property type="entry name" value="Cpn10"/>
    <property type="match status" value="1"/>
</dbReference>
<dbReference type="SUPFAM" id="SSF50129">
    <property type="entry name" value="GroES-like"/>
    <property type="match status" value="1"/>
</dbReference>
<dbReference type="PROSITE" id="PS00681">
    <property type="entry name" value="CHAPERONINS_CPN10"/>
    <property type="match status" value="1"/>
</dbReference>